<feature type="chain" id="PRO_1000196409" description="Small ribosomal subunit protein bS16">
    <location>
        <begin position="1"/>
        <end position="82"/>
    </location>
</feature>
<evidence type="ECO:0000255" key="1">
    <source>
        <dbReference type="HAMAP-Rule" id="MF_00385"/>
    </source>
</evidence>
<evidence type="ECO:0000305" key="2"/>
<reference key="1">
    <citation type="journal article" date="2009" name="PLoS Pathog.">
        <title>Molecular evolutionary consequences of niche restriction in Francisella tularensis, a facultative intracellular pathogen.</title>
        <authorList>
            <person name="Larsson P."/>
            <person name="Elfsmark D."/>
            <person name="Svensson K."/>
            <person name="Wikstroem P."/>
            <person name="Forsman M."/>
            <person name="Brettin T."/>
            <person name="Keim P."/>
            <person name="Johansson A."/>
        </authorList>
    </citation>
    <scope>NUCLEOTIDE SEQUENCE [LARGE SCALE GENOMIC DNA]</scope>
    <source>
        <strain>FSC147</strain>
    </source>
</reference>
<proteinExistence type="inferred from homology"/>
<dbReference type="EMBL" id="CP000915">
    <property type="protein sequence ID" value="ACD30295.1"/>
    <property type="molecule type" value="Genomic_DNA"/>
</dbReference>
<dbReference type="SMR" id="B2SFE2"/>
<dbReference type="KEGG" id="ftm:FTM_0215"/>
<dbReference type="HOGENOM" id="CLU_100590_5_1_6"/>
<dbReference type="GO" id="GO:0005737">
    <property type="term" value="C:cytoplasm"/>
    <property type="evidence" value="ECO:0007669"/>
    <property type="project" value="UniProtKB-ARBA"/>
</dbReference>
<dbReference type="GO" id="GO:0015935">
    <property type="term" value="C:small ribosomal subunit"/>
    <property type="evidence" value="ECO:0007669"/>
    <property type="project" value="TreeGrafter"/>
</dbReference>
<dbReference type="GO" id="GO:0003735">
    <property type="term" value="F:structural constituent of ribosome"/>
    <property type="evidence" value="ECO:0007669"/>
    <property type="project" value="InterPro"/>
</dbReference>
<dbReference type="GO" id="GO:0006412">
    <property type="term" value="P:translation"/>
    <property type="evidence" value="ECO:0007669"/>
    <property type="project" value="UniProtKB-UniRule"/>
</dbReference>
<dbReference type="Gene3D" id="3.30.1320.10">
    <property type="match status" value="1"/>
</dbReference>
<dbReference type="HAMAP" id="MF_00385">
    <property type="entry name" value="Ribosomal_bS16"/>
    <property type="match status" value="1"/>
</dbReference>
<dbReference type="InterPro" id="IPR000307">
    <property type="entry name" value="Ribosomal_bS16"/>
</dbReference>
<dbReference type="InterPro" id="IPR023803">
    <property type="entry name" value="Ribosomal_bS16_dom_sf"/>
</dbReference>
<dbReference type="NCBIfam" id="TIGR00002">
    <property type="entry name" value="S16"/>
    <property type="match status" value="1"/>
</dbReference>
<dbReference type="PANTHER" id="PTHR12919">
    <property type="entry name" value="30S RIBOSOMAL PROTEIN S16"/>
    <property type="match status" value="1"/>
</dbReference>
<dbReference type="PANTHER" id="PTHR12919:SF20">
    <property type="entry name" value="SMALL RIBOSOMAL SUBUNIT PROTEIN BS16M"/>
    <property type="match status" value="1"/>
</dbReference>
<dbReference type="Pfam" id="PF00886">
    <property type="entry name" value="Ribosomal_S16"/>
    <property type="match status" value="1"/>
</dbReference>
<dbReference type="SUPFAM" id="SSF54565">
    <property type="entry name" value="Ribosomal protein S16"/>
    <property type="match status" value="1"/>
</dbReference>
<organism>
    <name type="scientific">Francisella tularensis subsp. mediasiatica (strain FSC147)</name>
    <dbReference type="NCBI Taxonomy" id="441952"/>
    <lineage>
        <taxon>Bacteria</taxon>
        <taxon>Pseudomonadati</taxon>
        <taxon>Pseudomonadota</taxon>
        <taxon>Gammaproteobacteria</taxon>
        <taxon>Thiotrichales</taxon>
        <taxon>Francisellaceae</taxon>
        <taxon>Francisella</taxon>
    </lineage>
</organism>
<sequence>MVVIRMARGGAKKRPFYRIVVADKRSPRDGRFIEKLGFFNPLAKGGEERLKLDVAKAEAWLAKGAQPSDRVASLIKEAKKAA</sequence>
<accession>B2SFE2</accession>
<protein>
    <recommendedName>
        <fullName evidence="1">Small ribosomal subunit protein bS16</fullName>
    </recommendedName>
    <alternativeName>
        <fullName evidence="2">30S ribosomal protein S16</fullName>
    </alternativeName>
</protein>
<name>RS16_FRATM</name>
<gene>
    <name evidence="1" type="primary">rpsP</name>
    <name type="ordered locus">FTM_0215</name>
</gene>
<keyword id="KW-0687">Ribonucleoprotein</keyword>
<keyword id="KW-0689">Ribosomal protein</keyword>
<comment type="similarity">
    <text evidence="1">Belongs to the bacterial ribosomal protein bS16 family.</text>
</comment>